<organism>
    <name type="scientific">Pseudomonas aeruginosa (strain UCBPP-PA14)</name>
    <dbReference type="NCBI Taxonomy" id="208963"/>
    <lineage>
        <taxon>Bacteria</taxon>
        <taxon>Pseudomonadati</taxon>
        <taxon>Pseudomonadota</taxon>
        <taxon>Gammaproteobacteria</taxon>
        <taxon>Pseudomonadales</taxon>
        <taxon>Pseudomonadaceae</taxon>
        <taxon>Pseudomonas</taxon>
    </lineage>
</organism>
<protein>
    <recommendedName>
        <fullName evidence="1">Ribosome-binding factor A</fullName>
    </recommendedName>
</protein>
<feature type="chain" id="PRO_1000000174" description="Ribosome-binding factor A">
    <location>
        <begin position="1"/>
        <end position="129"/>
    </location>
</feature>
<dbReference type="EMBL" id="CP000438">
    <property type="protein sequence ID" value="ABJ14126.1"/>
    <property type="molecule type" value="Genomic_DNA"/>
</dbReference>
<dbReference type="RefSeq" id="WP_003095188.1">
    <property type="nucleotide sequence ID" value="NZ_CP034244.1"/>
</dbReference>
<dbReference type="SMR" id="Q02FS9"/>
<dbReference type="KEGG" id="pau:PA14_62740"/>
<dbReference type="PseudoCAP" id="PA14_62740"/>
<dbReference type="HOGENOM" id="CLU_089475_5_0_6"/>
<dbReference type="BioCyc" id="PAER208963:G1G74-5306-MONOMER"/>
<dbReference type="Proteomes" id="UP000000653">
    <property type="component" value="Chromosome"/>
</dbReference>
<dbReference type="GO" id="GO:0005829">
    <property type="term" value="C:cytosol"/>
    <property type="evidence" value="ECO:0007669"/>
    <property type="project" value="TreeGrafter"/>
</dbReference>
<dbReference type="GO" id="GO:0043024">
    <property type="term" value="F:ribosomal small subunit binding"/>
    <property type="evidence" value="ECO:0007669"/>
    <property type="project" value="TreeGrafter"/>
</dbReference>
<dbReference type="GO" id="GO:0030490">
    <property type="term" value="P:maturation of SSU-rRNA"/>
    <property type="evidence" value="ECO:0007669"/>
    <property type="project" value="UniProtKB-UniRule"/>
</dbReference>
<dbReference type="FunFam" id="3.30.300.20:FF:000029">
    <property type="entry name" value="Ribosome-binding factor A"/>
    <property type="match status" value="1"/>
</dbReference>
<dbReference type="Gene3D" id="3.30.300.20">
    <property type="match status" value="1"/>
</dbReference>
<dbReference type="HAMAP" id="MF_00003">
    <property type="entry name" value="RbfA"/>
    <property type="match status" value="1"/>
</dbReference>
<dbReference type="InterPro" id="IPR015946">
    <property type="entry name" value="KH_dom-like_a/b"/>
</dbReference>
<dbReference type="InterPro" id="IPR000238">
    <property type="entry name" value="RbfA"/>
</dbReference>
<dbReference type="InterPro" id="IPR023799">
    <property type="entry name" value="RbfA_dom_sf"/>
</dbReference>
<dbReference type="InterPro" id="IPR020053">
    <property type="entry name" value="Ribosome-bd_factorA_CS"/>
</dbReference>
<dbReference type="NCBIfam" id="TIGR00082">
    <property type="entry name" value="rbfA"/>
    <property type="match status" value="1"/>
</dbReference>
<dbReference type="PANTHER" id="PTHR33515">
    <property type="entry name" value="RIBOSOME-BINDING FACTOR A, CHLOROPLASTIC-RELATED"/>
    <property type="match status" value="1"/>
</dbReference>
<dbReference type="PANTHER" id="PTHR33515:SF1">
    <property type="entry name" value="RIBOSOME-BINDING FACTOR A, CHLOROPLASTIC-RELATED"/>
    <property type="match status" value="1"/>
</dbReference>
<dbReference type="Pfam" id="PF02033">
    <property type="entry name" value="RBFA"/>
    <property type="match status" value="1"/>
</dbReference>
<dbReference type="SUPFAM" id="SSF89919">
    <property type="entry name" value="Ribosome-binding factor A, RbfA"/>
    <property type="match status" value="1"/>
</dbReference>
<dbReference type="PROSITE" id="PS01319">
    <property type="entry name" value="RBFA"/>
    <property type="match status" value="1"/>
</dbReference>
<sequence length="129" mass="14548">MAKDYSRTQRIGDQMQRELAQLIQREIKDPRLGLVTITGVEVSRDVAHAKVFITVMGQDDAGKIALNMEILNDAAGYLRMLLGKSMKLRSVPQLHFHYDESIRRGAELSALIERAVAEDGRRHGDETED</sequence>
<reference key="1">
    <citation type="journal article" date="2006" name="Genome Biol.">
        <title>Genomic analysis reveals that Pseudomonas aeruginosa virulence is combinatorial.</title>
        <authorList>
            <person name="Lee D.G."/>
            <person name="Urbach J.M."/>
            <person name="Wu G."/>
            <person name="Liberati N.T."/>
            <person name="Feinbaum R.L."/>
            <person name="Miyata S."/>
            <person name="Diggins L.T."/>
            <person name="He J."/>
            <person name="Saucier M."/>
            <person name="Deziel E."/>
            <person name="Friedman L."/>
            <person name="Li L."/>
            <person name="Grills G."/>
            <person name="Montgomery K."/>
            <person name="Kucherlapati R."/>
            <person name="Rahme L.G."/>
            <person name="Ausubel F.M."/>
        </authorList>
    </citation>
    <scope>NUCLEOTIDE SEQUENCE [LARGE SCALE GENOMIC DNA]</scope>
    <source>
        <strain>UCBPP-PA14</strain>
    </source>
</reference>
<evidence type="ECO:0000255" key="1">
    <source>
        <dbReference type="HAMAP-Rule" id="MF_00003"/>
    </source>
</evidence>
<name>RBFA_PSEAB</name>
<accession>Q02FS9</accession>
<gene>
    <name evidence="1" type="primary">rbfA</name>
    <name type="ordered locus">PA14_62740</name>
</gene>
<comment type="function">
    <text evidence="1">One of several proteins that assist in the late maturation steps of the functional core of the 30S ribosomal subunit. Associates with free 30S ribosomal subunits (but not with 30S subunits that are part of 70S ribosomes or polysomes). Required for efficient processing of 16S rRNA. May interact with the 5'-terminal helix region of 16S rRNA.</text>
</comment>
<comment type="subunit">
    <text evidence="1">Monomer. Binds 30S ribosomal subunits, but not 50S ribosomal subunits or 70S ribosomes.</text>
</comment>
<comment type="subcellular location">
    <subcellularLocation>
        <location evidence="1">Cytoplasm</location>
    </subcellularLocation>
</comment>
<comment type="similarity">
    <text evidence="1">Belongs to the RbfA family.</text>
</comment>
<proteinExistence type="inferred from homology"/>
<keyword id="KW-0963">Cytoplasm</keyword>
<keyword id="KW-0690">Ribosome biogenesis</keyword>